<keyword id="KW-0106">Calcium</keyword>
<keyword id="KW-1015">Disulfide bond</keyword>
<keyword id="KW-1199">Hemostasis impairing toxin</keyword>
<keyword id="KW-0378">Hydrolase</keyword>
<keyword id="KW-0479">Metal-binding</keyword>
<keyword id="KW-0482">Metalloprotease</keyword>
<keyword id="KW-0645">Protease</keyword>
<keyword id="KW-0873">Pyrrolidone carboxylic acid</keyword>
<keyword id="KW-0964">Secreted</keyword>
<keyword id="KW-0732">Signal</keyword>
<keyword id="KW-0800">Toxin</keyword>
<keyword id="KW-0862">Zinc</keyword>
<keyword id="KW-0865">Zymogen</keyword>
<reference key="1">
    <citation type="submission" date="2001-05" db="EMBL/GenBank/DDBJ databases">
        <title>Molecular cloning and DNA sequence analysis of four metalloproteinase cDNAs from Northern blacktailed rattlesnake (Crotalus molossus molossus).</title>
        <authorList>
            <person name="Dagda R.K."/>
            <person name="Gasanov S.E."/>
            <person name="Rael E.D."/>
        </authorList>
    </citation>
    <scope>NUCLEOTIDE SEQUENCE [MRNA]</scope>
    <source>
        <tissue>Venom gland</tissue>
    </source>
</reference>
<feature type="signal peptide" evidence="2">
    <location>
        <begin position="1"/>
        <end position="20"/>
    </location>
</feature>
<feature type="propeptide" id="PRO_0000408030" evidence="1">
    <location>
        <begin position="21"/>
        <end position="190"/>
    </location>
</feature>
<feature type="chain" id="PRO_5000060572" description="Snake venom metalloproteinase">
    <location>
        <begin position="191"/>
        <end position="393"/>
    </location>
</feature>
<feature type="propeptide" id="PRO_0000408031" evidence="1">
    <location>
        <begin position="394"/>
        <end position="414"/>
    </location>
</feature>
<feature type="domain" description="Peptidase M12B" evidence="3">
    <location>
        <begin position="197"/>
        <end position="393"/>
    </location>
</feature>
<feature type="active site" evidence="3 4">
    <location>
        <position position="334"/>
    </location>
</feature>
<feature type="binding site" evidence="1">
    <location>
        <position position="200"/>
    </location>
    <ligand>
        <name>Ca(2+)</name>
        <dbReference type="ChEBI" id="CHEBI:29108"/>
    </ligand>
</feature>
<feature type="binding site" evidence="1">
    <location>
        <position position="284"/>
    </location>
    <ligand>
        <name>Ca(2+)</name>
        <dbReference type="ChEBI" id="CHEBI:29108"/>
    </ligand>
</feature>
<feature type="binding site" evidence="1">
    <location>
        <position position="333"/>
    </location>
    <ligand>
        <name>Zn(2+)</name>
        <dbReference type="ChEBI" id="CHEBI:29105"/>
        <note>catalytic</note>
    </ligand>
</feature>
<feature type="binding site" evidence="1">
    <location>
        <position position="337"/>
    </location>
    <ligand>
        <name>Zn(2+)</name>
        <dbReference type="ChEBI" id="CHEBI:29105"/>
        <note>catalytic</note>
    </ligand>
</feature>
<feature type="binding site" evidence="1">
    <location>
        <position position="343"/>
    </location>
    <ligand>
        <name>Zn(2+)</name>
        <dbReference type="ChEBI" id="CHEBI:29105"/>
        <note>catalytic</note>
    </ligand>
</feature>
<feature type="binding site" evidence="1">
    <location>
        <position position="388"/>
    </location>
    <ligand>
        <name>Ca(2+)</name>
        <dbReference type="ChEBI" id="CHEBI:29108"/>
    </ligand>
</feature>
<feature type="binding site" evidence="1">
    <location>
        <position position="391"/>
    </location>
    <ligand>
        <name>Ca(2+)</name>
        <dbReference type="ChEBI" id="CHEBI:29108"/>
    </ligand>
</feature>
<feature type="modified residue" description="Pyrrolidone carboxylic acid" evidence="1">
    <location>
        <position position="191"/>
    </location>
</feature>
<feature type="disulfide bond" evidence="3">
    <location>
        <begin position="308"/>
        <end position="388"/>
    </location>
</feature>
<feature type="disulfide bond" evidence="3">
    <location>
        <begin position="348"/>
        <end position="355"/>
    </location>
</feature>
<protein>
    <recommendedName>
        <fullName>Snake venom metalloproteinase</fullName>
        <shortName>SVMP</shortName>
        <ecNumber>3.4.24.-</ecNumber>
    </recommendedName>
</protein>
<sequence>MIEVLLVTICLAVFPYQGSSIILESGNVNDYEVVYPRKVTALPKGAVQPKYEDAMQYELKVNGEPVVLHLEKNKELFSKDYSETHYSPDGRKITTNPSVEDHCYYRGRIENDADSTASISACNGLKGHFKLQGEMYLIEPLVLSDSEAHAVFKLENVEKEDGGPKMCGVTQNWESYEPIKKASDLNFNSDQQRFAKRYVELVIVADHRMFMKYKSDLFSICSRVHDIVNFINWFYRSLNIRVSLTDLGIWSDQDYITVQSSAENTLHSFGEWGKSVLLKQKRHDNAQLLTAIVLDEDTLGLAYLSSMCNPWTSVEIIQDHSPINLLMGVTMAHELGHNLGMKHDEKDCLRGATLCIMRPGLTPGRSYEFSDDSMGYYQSFLDQYKPQCILNKPLRIDPVSTPVSGNELLEAGEE</sequence>
<evidence type="ECO:0000250" key="1"/>
<evidence type="ECO:0000255" key="2"/>
<evidence type="ECO:0000255" key="3">
    <source>
        <dbReference type="PROSITE-ProRule" id="PRU00276"/>
    </source>
</evidence>
<evidence type="ECO:0000255" key="4">
    <source>
        <dbReference type="PROSITE-ProRule" id="PRU10095"/>
    </source>
</evidence>
<evidence type="ECO:0000305" key="5"/>
<accession>Q8JJ51</accession>
<organism>
    <name type="scientific">Crotalus molossus molossus</name>
    <name type="common">Northern black-tailed rattlesnake</name>
    <dbReference type="NCBI Taxonomy" id="31151"/>
    <lineage>
        <taxon>Eukaryota</taxon>
        <taxon>Metazoa</taxon>
        <taxon>Chordata</taxon>
        <taxon>Craniata</taxon>
        <taxon>Vertebrata</taxon>
        <taxon>Euteleostomi</taxon>
        <taxon>Lepidosauria</taxon>
        <taxon>Squamata</taxon>
        <taxon>Bifurcata</taxon>
        <taxon>Unidentata</taxon>
        <taxon>Episquamata</taxon>
        <taxon>Toxicofera</taxon>
        <taxon>Serpentes</taxon>
        <taxon>Colubroidea</taxon>
        <taxon>Viperidae</taxon>
        <taxon>Crotalinae</taxon>
        <taxon>Crotalus</taxon>
    </lineage>
</organism>
<dbReference type="EC" id="3.4.24.-"/>
<dbReference type="EMBL" id="AF378289">
    <property type="protein sequence ID" value="AAM27041.1"/>
    <property type="molecule type" value="mRNA"/>
</dbReference>
<dbReference type="SMR" id="Q8JJ51"/>
<dbReference type="MEROPS" id="M12.150"/>
<dbReference type="GO" id="GO:0005576">
    <property type="term" value="C:extracellular region"/>
    <property type="evidence" value="ECO:0007669"/>
    <property type="project" value="UniProtKB-SubCell"/>
</dbReference>
<dbReference type="GO" id="GO:0005886">
    <property type="term" value="C:plasma membrane"/>
    <property type="evidence" value="ECO:0007669"/>
    <property type="project" value="TreeGrafter"/>
</dbReference>
<dbReference type="GO" id="GO:0046872">
    <property type="term" value="F:metal ion binding"/>
    <property type="evidence" value="ECO:0007669"/>
    <property type="project" value="UniProtKB-KW"/>
</dbReference>
<dbReference type="GO" id="GO:0004222">
    <property type="term" value="F:metalloendopeptidase activity"/>
    <property type="evidence" value="ECO:0007669"/>
    <property type="project" value="InterPro"/>
</dbReference>
<dbReference type="GO" id="GO:0090729">
    <property type="term" value="F:toxin activity"/>
    <property type="evidence" value="ECO:0007669"/>
    <property type="project" value="UniProtKB-KW"/>
</dbReference>
<dbReference type="GO" id="GO:0006508">
    <property type="term" value="P:proteolysis"/>
    <property type="evidence" value="ECO:0007669"/>
    <property type="project" value="UniProtKB-KW"/>
</dbReference>
<dbReference type="CDD" id="cd04269">
    <property type="entry name" value="ZnMc_adamalysin_II_like"/>
    <property type="match status" value="1"/>
</dbReference>
<dbReference type="FunFam" id="3.40.390.10:FF:000002">
    <property type="entry name" value="Disintegrin and metalloproteinase domain-containing protein 22"/>
    <property type="match status" value="1"/>
</dbReference>
<dbReference type="Gene3D" id="3.40.390.10">
    <property type="entry name" value="Collagenase (Catalytic Domain)"/>
    <property type="match status" value="1"/>
</dbReference>
<dbReference type="InterPro" id="IPR024079">
    <property type="entry name" value="MetalloPept_cat_dom_sf"/>
</dbReference>
<dbReference type="InterPro" id="IPR001590">
    <property type="entry name" value="Peptidase_M12B"/>
</dbReference>
<dbReference type="InterPro" id="IPR002870">
    <property type="entry name" value="Peptidase_M12B_N"/>
</dbReference>
<dbReference type="InterPro" id="IPR034027">
    <property type="entry name" value="Reprolysin_adamalysin"/>
</dbReference>
<dbReference type="PANTHER" id="PTHR11905">
    <property type="entry name" value="ADAM A DISINTEGRIN AND METALLOPROTEASE DOMAIN"/>
    <property type="match status" value="1"/>
</dbReference>
<dbReference type="PANTHER" id="PTHR11905:SF32">
    <property type="entry name" value="DISINTEGRIN AND METALLOPROTEINASE DOMAIN-CONTAINING PROTEIN 28"/>
    <property type="match status" value="1"/>
</dbReference>
<dbReference type="Pfam" id="PF01562">
    <property type="entry name" value="Pep_M12B_propep"/>
    <property type="match status" value="1"/>
</dbReference>
<dbReference type="Pfam" id="PF01421">
    <property type="entry name" value="Reprolysin"/>
    <property type="match status" value="1"/>
</dbReference>
<dbReference type="SUPFAM" id="SSF55486">
    <property type="entry name" value="Metalloproteases ('zincins'), catalytic domain"/>
    <property type="match status" value="1"/>
</dbReference>
<dbReference type="PROSITE" id="PS50215">
    <property type="entry name" value="ADAM_MEPRO"/>
    <property type="match status" value="1"/>
</dbReference>
<dbReference type="PROSITE" id="PS00142">
    <property type="entry name" value="ZINC_PROTEASE"/>
    <property type="match status" value="1"/>
</dbReference>
<name>VM1_CROMM</name>
<comment type="function">
    <text evidence="1">Snake venom metalloproteinase that impairs hemostasis in the envenomed animal.</text>
</comment>
<comment type="cofactor">
    <cofactor evidence="1">
        <name>Zn(2+)</name>
        <dbReference type="ChEBI" id="CHEBI:29105"/>
    </cofactor>
    <text evidence="1">Binds 1 zinc ion per subunit.</text>
</comment>
<comment type="subunit">
    <text evidence="1">Monomer.</text>
</comment>
<comment type="subcellular location">
    <subcellularLocation>
        <location evidence="1">Secreted</location>
    </subcellularLocation>
</comment>
<comment type="tissue specificity">
    <text>Expressed by the venom gland.</text>
</comment>
<comment type="similarity">
    <text evidence="5">Belongs to the venom metalloproteinase (M12B) family. P-I subfamily.</text>
</comment>
<proteinExistence type="evidence at transcript level"/>